<accession>Q1D980</accession>
<protein>
    <recommendedName>
        <fullName evidence="1">Ribonuclease HII</fullName>
        <shortName evidence="1">RNase HII</shortName>
        <ecNumber evidence="1">3.1.26.4</ecNumber>
    </recommendedName>
</protein>
<name>RNH2_MYXXD</name>
<gene>
    <name evidence="1" type="primary">rnhB</name>
    <name type="ordered locus">MXAN_2574</name>
</gene>
<keyword id="KW-0963">Cytoplasm</keyword>
<keyword id="KW-0255">Endonuclease</keyword>
<keyword id="KW-0378">Hydrolase</keyword>
<keyword id="KW-0464">Manganese</keyword>
<keyword id="KW-0479">Metal-binding</keyword>
<keyword id="KW-0540">Nuclease</keyword>
<keyword id="KW-1185">Reference proteome</keyword>
<feature type="chain" id="PRO_0000334925" description="Ribonuclease HII">
    <location>
        <begin position="1"/>
        <end position="293"/>
    </location>
</feature>
<feature type="domain" description="RNase H type-2" evidence="2">
    <location>
        <begin position="81"/>
        <end position="271"/>
    </location>
</feature>
<feature type="region of interest" description="Disordered" evidence="3">
    <location>
        <begin position="273"/>
        <end position="293"/>
    </location>
</feature>
<feature type="binding site" evidence="1">
    <location>
        <position position="87"/>
    </location>
    <ligand>
        <name>a divalent metal cation</name>
        <dbReference type="ChEBI" id="CHEBI:60240"/>
    </ligand>
</feature>
<feature type="binding site" evidence="1">
    <location>
        <position position="88"/>
    </location>
    <ligand>
        <name>a divalent metal cation</name>
        <dbReference type="ChEBI" id="CHEBI:60240"/>
    </ligand>
</feature>
<feature type="binding site" evidence="1">
    <location>
        <position position="180"/>
    </location>
    <ligand>
        <name>a divalent metal cation</name>
        <dbReference type="ChEBI" id="CHEBI:60240"/>
    </ligand>
</feature>
<proteinExistence type="inferred from homology"/>
<organism>
    <name type="scientific">Myxococcus xanthus (strain DK1622)</name>
    <dbReference type="NCBI Taxonomy" id="246197"/>
    <lineage>
        <taxon>Bacteria</taxon>
        <taxon>Pseudomonadati</taxon>
        <taxon>Myxococcota</taxon>
        <taxon>Myxococcia</taxon>
        <taxon>Myxococcales</taxon>
        <taxon>Cystobacterineae</taxon>
        <taxon>Myxococcaceae</taxon>
        <taxon>Myxococcus</taxon>
    </lineage>
</organism>
<comment type="function">
    <text evidence="1">Endonuclease that specifically degrades the RNA of RNA-DNA hybrids.</text>
</comment>
<comment type="catalytic activity">
    <reaction evidence="1">
        <text>Endonucleolytic cleavage to 5'-phosphomonoester.</text>
        <dbReference type="EC" id="3.1.26.4"/>
    </reaction>
</comment>
<comment type="cofactor">
    <cofactor evidence="1">
        <name>Mn(2+)</name>
        <dbReference type="ChEBI" id="CHEBI:29035"/>
    </cofactor>
    <cofactor evidence="1">
        <name>Mg(2+)</name>
        <dbReference type="ChEBI" id="CHEBI:18420"/>
    </cofactor>
    <text evidence="1">Manganese or magnesium. Binds 1 divalent metal ion per monomer in the absence of substrate. May bind a second metal ion after substrate binding.</text>
</comment>
<comment type="subcellular location">
    <subcellularLocation>
        <location evidence="1">Cytoplasm</location>
    </subcellularLocation>
</comment>
<comment type="similarity">
    <text evidence="1">Belongs to the RNase HII family.</text>
</comment>
<sequence>MSADTVEQLLQCALSELTARFVTQATPVPTGLLEALDADPRAGAHALARRIRSRQEKNRAEGQRMRKLLRFETELWEQGHTHIAGVDEAGMAPLAGPVVAAAAVLPKGFRLKGLDDSKKILDAEKRESLAEAIKRDAVAWAVGRAEVEEIDRINIYHAGLLAMRRAVEGLSVKPDHLLVDARTVPECSVPQKGIIKGDALSLSIAAASILAKTTRDRWMAELDDQYPGYGLAAHKGYPTPHHLQVLREKGVLPIHRRSFAPVREALGLPTGSPPSALQAELFPEAPSRTGVKS</sequence>
<dbReference type="EC" id="3.1.26.4" evidence="1"/>
<dbReference type="EMBL" id="CP000113">
    <property type="protein sequence ID" value="ABF92034.1"/>
    <property type="molecule type" value="Genomic_DNA"/>
</dbReference>
<dbReference type="RefSeq" id="WP_011552644.1">
    <property type="nucleotide sequence ID" value="NC_008095.1"/>
</dbReference>
<dbReference type="SMR" id="Q1D980"/>
<dbReference type="STRING" id="246197.MXAN_2574"/>
<dbReference type="EnsemblBacteria" id="ABF92034">
    <property type="protein sequence ID" value="ABF92034"/>
    <property type="gene ID" value="MXAN_2574"/>
</dbReference>
<dbReference type="GeneID" id="41359952"/>
<dbReference type="KEGG" id="mxa:MXAN_2574"/>
<dbReference type="eggNOG" id="COG0164">
    <property type="taxonomic scope" value="Bacteria"/>
</dbReference>
<dbReference type="HOGENOM" id="CLU_036532_2_1_7"/>
<dbReference type="OrthoDB" id="9803420at2"/>
<dbReference type="Proteomes" id="UP000002402">
    <property type="component" value="Chromosome"/>
</dbReference>
<dbReference type="GO" id="GO:0005737">
    <property type="term" value="C:cytoplasm"/>
    <property type="evidence" value="ECO:0007669"/>
    <property type="project" value="UniProtKB-SubCell"/>
</dbReference>
<dbReference type="GO" id="GO:0032299">
    <property type="term" value="C:ribonuclease H2 complex"/>
    <property type="evidence" value="ECO:0007669"/>
    <property type="project" value="TreeGrafter"/>
</dbReference>
<dbReference type="GO" id="GO:0030145">
    <property type="term" value="F:manganese ion binding"/>
    <property type="evidence" value="ECO:0007669"/>
    <property type="project" value="UniProtKB-UniRule"/>
</dbReference>
<dbReference type="GO" id="GO:0003723">
    <property type="term" value="F:RNA binding"/>
    <property type="evidence" value="ECO:0007669"/>
    <property type="project" value="InterPro"/>
</dbReference>
<dbReference type="GO" id="GO:0004523">
    <property type="term" value="F:RNA-DNA hybrid ribonuclease activity"/>
    <property type="evidence" value="ECO:0007669"/>
    <property type="project" value="UniProtKB-UniRule"/>
</dbReference>
<dbReference type="GO" id="GO:0043137">
    <property type="term" value="P:DNA replication, removal of RNA primer"/>
    <property type="evidence" value="ECO:0007669"/>
    <property type="project" value="TreeGrafter"/>
</dbReference>
<dbReference type="GO" id="GO:0006298">
    <property type="term" value="P:mismatch repair"/>
    <property type="evidence" value="ECO:0007669"/>
    <property type="project" value="TreeGrafter"/>
</dbReference>
<dbReference type="CDD" id="cd07182">
    <property type="entry name" value="RNase_HII_bacteria_HII_like"/>
    <property type="match status" value="1"/>
</dbReference>
<dbReference type="FunFam" id="3.30.420.10:FF:000006">
    <property type="entry name" value="Ribonuclease HII"/>
    <property type="match status" value="1"/>
</dbReference>
<dbReference type="Gene3D" id="3.30.420.10">
    <property type="entry name" value="Ribonuclease H-like superfamily/Ribonuclease H"/>
    <property type="match status" value="1"/>
</dbReference>
<dbReference type="HAMAP" id="MF_00052_B">
    <property type="entry name" value="RNase_HII_B"/>
    <property type="match status" value="1"/>
</dbReference>
<dbReference type="InterPro" id="IPR022898">
    <property type="entry name" value="RNase_HII"/>
</dbReference>
<dbReference type="InterPro" id="IPR001352">
    <property type="entry name" value="RNase_HII/HIII"/>
</dbReference>
<dbReference type="InterPro" id="IPR024567">
    <property type="entry name" value="RNase_HII/HIII_dom"/>
</dbReference>
<dbReference type="InterPro" id="IPR012337">
    <property type="entry name" value="RNaseH-like_sf"/>
</dbReference>
<dbReference type="InterPro" id="IPR036397">
    <property type="entry name" value="RNaseH_sf"/>
</dbReference>
<dbReference type="NCBIfam" id="NF000594">
    <property type="entry name" value="PRK00015.1-1"/>
    <property type="match status" value="1"/>
</dbReference>
<dbReference type="NCBIfam" id="NF000595">
    <property type="entry name" value="PRK00015.1-3"/>
    <property type="match status" value="1"/>
</dbReference>
<dbReference type="PANTHER" id="PTHR10954">
    <property type="entry name" value="RIBONUCLEASE H2 SUBUNIT A"/>
    <property type="match status" value="1"/>
</dbReference>
<dbReference type="PANTHER" id="PTHR10954:SF18">
    <property type="entry name" value="RIBONUCLEASE HII"/>
    <property type="match status" value="1"/>
</dbReference>
<dbReference type="Pfam" id="PF01351">
    <property type="entry name" value="RNase_HII"/>
    <property type="match status" value="1"/>
</dbReference>
<dbReference type="SUPFAM" id="SSF53098">
    <property type="entry name" value="Ribonuclease H-like"/>
    <property type="match status" value="1"/>
</dbReference>
<dbReference type="PROSITE" id="PS51975">
    <property type="entry name" value="RNASE_H_2"/>
    <property type="match status" value="1"/>
</dbReference>
<evidence type="ECO:0000255" key="1">
    <source>
        <dbReference type="HAMAP-Rule" id="MF_00052"/>
    </source>
</evidence>
<evidence type="ECO:0000255" key="2">
    <source>
        <dbReference type="PROSITE-ProRule" id="PRU01319"/>
    </source>
</evidence>
<evidence type="ECO:0000256" key="3">
    <source>
        <dbReference type="SAM" id="MobiDB-lite"/>
    </source>
</evidence>
<reference key="1">
    <citation type="journal article" date="2006" name="Proc. Natl. Acad. Sci. U.S.A.">
        <title>Evolution of sensory complexity recorded in a myxobacterial genome.</title>
        <authorList>
            <person name="Goldman B.S."/>
            <person name="Nierman W.C."/>
            <person name="Kaiser D."/>
            <person name="Slater S.C."/>
            <person name="Durkin A.S."/>
            <person name="Eisen J.A."/>
            <person name="Ronning C.M."/>
            <person name="Barbazuk W.B."/>
            <person name="Blanchard M."/>
            <person name="Field C."/>
            <person name="Halling C."/>
            <person name="Hinkle G."/>
            <person name="Iartchuk O."/>
            <person name="Kim H.S."/>
            <person name="Mackenzie C."/>
            <person name="Madupu R."/>
            <person name="Miller N."/>
            <person name="Shvartsbeyn A."/>
            <person name="Sullivan S.A."/>
            <person name="Vaudin M."/>
            <person name="Wiegand R."/>
            <person name="Kaplan H.B."/>
        </authorList>
    </citation>
    <scope>NUCLEOTIDE SEQUENCE [LARGE SCALE GENOMIC DNA]</scope>
    <source>
        <strain>DK1622</strain>
    </source>
</reference>